<protein>
    <recommendedName>
        <fullName>Protein MGF 360-9L</fullName>
    </recommendedName>
</protein>
<organism>
    <name type="scientific">African swine fever virus (isolate Tick/Malawi/Lil 20-1/1983)</name>
    <name type="common">ASFV</name>
    <dbReference type="NCBI Taxonomy" id="10500"/>
    <lineage>
        <taxon>Viruses</taxon>
        <taxon>Varidnaviria</taxon>
        <taxon>Bamfordvirae</taxon>
        <taxon>Nucleocytoviricota</taxon>
        <taxon>Pokkesviricetes</taxon>
        <taxon>Asfuvirales</taxon>
        <taxon>Asfarviridae</taxon>
        <taxon>Asfivirus</taxon>
        <taxon>African swine fever virus</taxon>
    </lineage>
</organism>
<name>3609L_ASFM2</name>
<sequence>MVLSLQTLTKKVLARQYPAQCHHHFLKCCGLWWHDGPIVYHQNQKKIWSSFFTDGVNINAALVKAVKENNYDLIVLFTEWGANIDYSLLSVNTECTRDLCRELGAKEQLKQQEVLHFFNMVKRDLTGSNIILCHEVFSHNPILETINRTKLRGIIYEQLEALMENTDILSELLTKYWYGMAVEFNLTKAIHYFYQRYAHLHQWRLMCALFYNNVFDLHELYTKEKVRMDMDEMLKWACRKNYNYLTIYYCCIVLGADLNKAMFHSIQFYNLGNIFFCIDLGADAFEEGKTVAYQNDKSFIASILSLNCYSKNDSLSLKETDPEVIKRMLKDYHSKNMSMAHKYYIKYGFDNID</sequence>
<proteinExistence type="inferred from homology"/>
<comment type="function">
    <text evidence="1">Plays a role in virus cell tropism, and may be required for efficient virus replication in macrophages. In addition, inhibits IFN-beta-induced IFN-stimulated genes (ISGs) transcription. Mechanistically, degrades host STAT1 and STAT2 through apoptosis and ubiquitin-proteasome pathways respectively.</text>
</comment>
<comment type="subunit">
    <text evidence="1">Interacts with host STAT1; this interaction mediates STAT1 degradation through apoptosis. Interacts with host STAT2; this interaction mediates STAT2 degradation through the proteasome.</text>
</comment>
<comment type="subcellular location">
    <subcellularLocation>
        <location evidence="1">Host cytoplasm</location>
    </subcellularLocation>
</comment>
<comment type="induction">
    <text evidence="2">Expressed in the early phase of the viral replicative cycle.</text>
</comment>
<comment type="similarity">
    <text evidence="2">Belongs to the asfivirus MGF 360 family.</text>
</comment>
<organismHost>
    <name type="scientific">Ornithodoros</name>
    <name type="common">relapsing fever ticks</name>
    <dbReference type="NCBI Taxonomy" id="6937"/>
</organismHost>
<organismHost>
    <name type="scientific">Phacochoerus aethiopicus</name>
    <name type="common">Warthog</name>
    <dbReference type="NCBI Taxonomy" id="85517"/>
</organismHost>
<organismHost>
    <name type="scientific">Phacochoerus africanus</name>
    <name type="common">Warthog</name>
    <dbReference type="NCBI Taxonomy" id="41426"/>
</organismHost>
<organismHost>
    <name type="scientific">Potamochoerus larvatus</name>
    <name type="common">Bushpig</name>
    <dbReference type="NCBI Taxonomy" id="273792"/>
</organismHost>
<organismHost>
    <name type="scientific">Sus scrofa</name>
    <name type="common">Pig</name>
    <dbReference type="NCBI Taxonomy" id="9823"/>
</organismHost>
<accession>Q65121</accession>
<feature type="chain" id="PRO_0000373271" description="Protein MGF 360-9L">
    <location>
        <begin position="1"/>
        <end position="353"/>
    </location>
</feature>
<dbReference type="EMBL" id="U03762">
    <property type="protein sequence ID" value="AAA50534.1"/>
    <property type="molecule type" value="Genomic_DNA"/>
</dbReference>
<dbReference type="EMBL" id="AY261361">
    <property type="status" value="NOT_ANNOTATED_CDS"/>
    <property type="molecule type" value="Genomic_DNA"/>
</dbReference>
<dbReference type="SMR" id="Q65121"/>
<dbReference type="Proteomes" id="UP000000860">
    <property type="component" value="Segment"/>
</dbReference>
<dbReference type="GO" id="GO:0030430">
    <property type="term" value="C:host cell cytoplasm"/>
    <property type="evidence" value="ECO:0007669"/>
    <property type="project" value="UniProtKB-SubCell"/>
</dbReference>
<dbReference type="GO" id="GO:0052170">
    <property type="term" value="P:symbiont-mediated suppression of host innate immune response"/>
    <property type="evidence" value="ECO:0007669"/>
    <property type="project" value="UniProtKB-KW"/>
</dbReference>
<dbReference type="GO" id="GO:0039563">
    <property type="term" value="P:symbiont-mediated suppression of host JAK-STAT cascade via inhibition of STAT1 activity"/>
    <property type="evidence" value="ECO:0007669"/>
    <property type="project" value="UniProtKB-KW"/>
</dbReference>
<dbReference type="GO" id="GO:0039564">
    <property type="term" value="P:symbiont-mediated suppression of host JAK-STAT cascade via inhibition of STAT2 activity"/>
    <property type="evidence" value="ECO:0007669"/>
    <property type="project" value="UniProtKB-KW"/>
</dbReference>
<dbReference type="GO" id="GO:0039502">
    <property type="term" value="P:symbiont-mediated suppression of host type I interferon-mediated signaling pathway"/>
    <property type="evidence" value="ECO:0007669"/>
    <property type="project" value="UniProtKB-KW"/>
</dbReference>
<dbReference type="GO" id="GO:0042330">
    <property type="term" value="P:taxis"/>
    <property type="evidence" value="ECO:0007669"/>
    <property type="project" value="InterPro"/>
</dbReference>
<dbReference type="InterPro" id="IPR002595">
    <property type="entry name" value="ASFV_MGF360"/>
</dbReference>
<dbReference type="Pfam" id="PF01671">
    <property type="entry name" value="ASFV_360"/>
    <property type="match status" value="1"/>
</dbReference>
<evidence type="ECO:0000250" key="1">
    <source>
        <dbReference type="UniProtKB" id="Q65137"/>
    </source>
</evidence>
<evidence type="ECO:0000305" key="2"/>
<reference key="1">
    <citation type="journal article" date="1994" name="Virology">
        <title>Two novel multigene families, 530 and 300, in the terminal variable regions of African swine fever virus genome.</title>
        <authorList>
            <person name="Yozawa T."/>
            <person name="Kutish G.F."/>
            <person name="Afonso C.L."/>
            <person name="Lu Z."/>
            <person name="Rock D.L."/>
        </authorList>
    </citation>
    <scope>NUCLEOTIDE SEQUENCE [GENOMIC DNA]</scope>
</reference>
<reference key="2">
    <citation type="submission" date="2003-03" db="EMBL/GenBank/DDBJ databases">
        <title>African swine fever virus genomes.</title>
        <authorList>
            <person name="Kutish G.F."/>
            <person name="Rock D.L."/>
        </authorList>
    </citation>
    <scope>NUCLEOTIDE SEQUENCE [LARGE SCALE GENOMIC DNA]</scope>
</reference>
<gene>
    <name type="ordered locus">Mal-028</name>
    <name type="ORF">LMW3CL</name>
</gene>
<keyword id="KW-0244">Early protein</keyword>
<keyword id="KW-1035">Host cytoplasm</keyword>
<keyword id="KW-0945">Host-virus interaction</keyword>
<keyword id="KW-1090">Inhibition of host innate immune response by virus</keyword>
<keyword id="KW-1114">Inhibition of host interferon signaling pathway by virus</keyword>
<keyword id="KW-1105">Inhibition of host STAT1 by virus</keyword>
<keyword id="KW-1106">Inhibition of host STAT2 by virus</keyword>
<keyword id="KW-0922">Interferon antiviral system evasion</keyword>
<keyword id="KW-0899">Viral immunoevasion</keyword>